<organism>
    <name type="scientific">Potamotrygon orbignyi</name>
    <name type="common">Smooth back river stingray</name>
    <dbReference type="NCBI Taxonomy" id="86381"/>
    <lineage>
        <taxon>Eukaryota</taxon>
        <taxon>Metazoa</taxon>
        <taxon>Chordata</taxon>
        <taxon>Craniata</taxon>
        <taxon>Vertebrata</taxon>
        <taxon>Chondrichthyes</taxon>
        <taxon>Elasmobranchii</taxon>
        <taxon>Batoidea</taxon>
        <taxon>Myliobatiformes</taxon>
        <taxon>Potamotrygonidae</taxon>
        <taxon>Potamotrygon</taxon>
    </lineage>
</organism>
<reference evidence="3" key="1">
    <citation type="journal article" date="2006" name="Peptides">
        <title>Orpotrin: a novel vasoconstrictor peptide from the venom of the Brazilian stingray Potamotrygon gr. orbignyi.</title>
        <authorList>
            <person name="Conceicao K."/>
            <person name="Konno K."/>
            <person name="Melo R.L."/>
            <person name="Marques E.E."/>
            <person name="Hiruma-Lima C.A."/>
            <person name="Lima C."/>
            <person name="Richardson M."/>
            <person name="Pimenta D.C."/>
            <person name="Lopes-Ferreira M."/>
        </authorList>
    </citation>
    <scope>PROTEIN SEQUENCE</scope>
    <scope>FUNCTION</scope>
    <scope>SUBCELLULAR LOCATION</scope>
    <scope>TISSUE SPECIFICITY</scope>
    <scope>MASS SPECTROMETRY</scope>
    <source>
        <tissue evidence="2">Venom</tissue>
    </source>
</reference>
<proteinExistence type="evidence at protein level"/>
<dbReference type="GO" id="GO:0005576">
    <property type="term" value="C:extracellular region"/>
    <property type="evidence" value="ECO:0007669"/>
    <property type="project" value="UniProtKB-SubCell"/>
</dbReference>
<dbReference type="GO" id="GO:0090729">
    <property type="term" value="F:toxin activity"/>
    <property type="evidence" value="ECO:0007669"/>
    <property type="project" value="UniProtKB-KW"/>
</dbReference>
<dbReference type="GO" id="GO:0042310">
    <property type="term" value="P:vasoconstriction"/>
    <property type="evidence" value="ECO:0007669"/>
    <property type="project" value="UniProtKB-KW"/>
</dbReference>
<name>ORPO_POTOR</name>
<keyword id="KW-0903">Direct protein sequencing</keyword>
<keyword id="KW-0964">Secreted</keyword>
<keyword id="KW-0800">Toxin</keyword>
<keyword id="KW-0838">Vasoactive</keyword>
<keyword id="KW-0839">Vasoconstrictor</keyword>
<comment type="function">
    <text evidence="2">Vasoconstrictor.</text>
</comment>
<comment type="subcellular location">
    <subcellularLocation>
        <location evidence="2">Secreted</location>
    </subcellularLocation>
</comment>
<comment type="tissue specificity">
    <text evidence="2">Expressed by the venom gland.</text>
</comment>
<comment type="mass spectrometry"/>
<comment type="mass spectrometry"/>
<comment type="miscellaneous">
    <text evidence="2">May be produced from creatine kinase by limited proteolysis.</text>
</comment>
<comment type="similarity">
    <text evidence="1">Belongs to the ATP:guanido phosphotransferase family.</text>
</comment>
<sequence>HGGYKPTDK</sequence>
<accession>P85159</accession>
<evidence type="ECO:0000255" key="1"/>
<evidence type="ECO:0000269" key="2">
    <source>
    </source>
</evidence>
<evidence type="ECO:0000305" key="3"/>
<feature type="peptide" id="PRO_0000292606" description="Orpotrin" evidence="2">
    <location>
        <begin position="1"/>
        <end position="9"/>
    </location>
</feature>
<protein>
    <recommendedName>
        <fullName>Orpotrin</fullName>
    </recommendedName>
</protein>